<comment type="function">
    <text evidence="1">One of the primary rRNA binding proteins, it binds directly near the 3'-end of the 23S rRNA, where it nucleates assembly of the 50S subunit.</text>
</comment>
<comment type="subunit">
    <text evidence="1">Part of the 50S ribosomal subunit. Forms a cluster with proteins L14 and L19.</text>
</comment>
<comment type="similarity">
    <text evidence="1">Belongs to the universal ribosomal protein uL3 family.</text>
</comment>
<proteinExistence type="inferred from homology"/>
<feature type="chain" id="PRO_1000052010" description="Large ribosomal subunit protein uL3">
    <location>
        <begin position="1"/>
        <end position="210"/>
    </location>
</feature>
<feature type="region of interest" description="Disordered" evidence="2">
    <location>
        <begin position="125"/>
        <end position="151"/>
    </location>
</feature>
<name>RL3_BACAH</name>
<gene>
    <name evidence="1" type="primary">rplC</name>
    <name type="ordered locus">BALH_0108</name>
</gene>
<keyword id="KW-0687">Ribonucleoprotein</keyword>
<keyword id="KW-0689">Ribosomal protein</keyword>
<keyword id="KW-0694">RNA-binding</keyword>
<keyword id="KW-0699">rRNA-binding</keyword>
<sequence length="210" mass="22692">MTKGILGRKIGMTQVFAENGELIPVTVIAANPNVVLQKKTTETDGYNAIQLGFEDKREKLTNKPEQGHTAKASTTPKRFIREIRDADVDGLEVGQEVKVDVFATGEIVDVTGISKGKGFQGVIKRHGQSRGPMSHGSRYHRRPGSMGPVAPNRVFKGKKLAGRMGGDQVTIQNLEIVQVDTERNLLLVKGNVPGAKKSLVVVQGAVKVSK</sequence>
<accession>A0R8I0</accession>
<dbReference type="EMBL" id="CP000485">
    <property type="protein sequence ID" value="ABK83523.1"/>
    <property type="molecule type" value="Genomic_DNA"/>
</dbReference>
<dbReference type="RefSeq" id="WP_000160207.1">
    <property type="nucleotide sequence ID" value="NC_008600.1"/>
</dbReference>
<dbReference type="SMR" id="A0R8I0"/>
<dbReference type="GeneID" id="93010943"/>
<dbReference type="KEGG" id="btl:BALH_0108"/>
<dbReference type="HOGENOM" id="CLU_044142_4_1_9"/>
<dbReference type="GO" id="GO:0022625">
    <property type="term" value="C:cytosolic large ribosomal subunit"/>
    <property type="evidence" value="ECO:0007669"/>
    <property type="project" value="TreeGrafter"/>
</dbReference>
<dbReference type="GO" id="GO:0019843">
    <property type="term" value="F:rRNA binding"/>
    <property type="evidence" value="ECO:0007669"/>
    <property type="project" value="UniProtKB-UniRule"/>
</dbReference>
<dbReference type="GO" id="GO:0003735">
    <property type="term" value="F:structural constituent of ribosome"/>
    <property type="evidence" value="ECO:0007669"/>
    <property type="project" value="InterPro"/>
</dbReference>
<dbReference type="GO" id="GO:0006412">
    <property type="term" value="P:translation"/>
    <property type="evidence" value="ECO:0007669"/>
    <property type="project" value="UniProtKB-UniRule"/>
</dbReference>
<dbReference type="FunFam" id="2.40.30.10:FF:000004">
    <property type="entry name" value="50S ribosomal protein L3"/>
    <property type="match status" value="1"/>
</dbReference>
<dbReference type="FunFam" id="3.30.160.810:FF:000002">
    <property type="entry name" value="50S ribosomal protein L3"/>
    <property type="match status" value="1"/>
</dbReference>
<dbReference type="Gene3D" id="3.30.160.810">
    <property type="match status" value="1"/>
</dbReference>
<dbReference type="Gene3D" id="2.40.30.10">
    <property type="entry name" value="Translation factors"/>
    <property type="match status" value="1"/>
</dbReference>
<dbReference type="HAMAP" id="MF_01325_B">
    <property type="entry name" value="Ribosomal_uL3_B"/>
    <property type="match status" value="1"/>
</dbReference>
<dbReference type="InterPro" id="IPR000597">
    <property type="entry name" value="Ribosomal_uL3"/>
</dbReference>
<dbReference type="InterPro" id="IPR019927">
    <property type="entry name" value="Ribosomal_uL3_bac/org-type"/>
</dbReference>
<dbReference type="InterPro" id="IPR019926">
    <property type="entry name" value="Ribosomal_uL3_CS"/>
</dbReference>
<dbReference type="InterPro" id="IPR009000">
    <property type="entry name" value="Transl_B-barrel_sf"/>
</dbReference>
<dbReference type="NCBIfam" id="TIGR03625">
    <property type="entry name" value="L3_bact"/>
    <property type="match status" value="1"/>
</dbReference>
<dbReference type="PANTHER" id="PTHR11229">
    <property type="entry name" value="50S RIBOSOMAL PROTEIN L3"/>
    <property type="match status" value="1"/>
</dbReference>
<dbReference type="PANTHER" id="PTHR11229:SF16">
    <property type="entry name" value="LARGE RIBOSOMAL SUBUNIT PROTEIN UL3C"/>
    <property type="match status" value="1"/>
</dbReference>
<dbReference type="Pfam" id="PF00297">
    <property type="entry name" value="Ribosomal_L3"/>
    <property type="match status" value="1"/>
</dbReference>
<dbReference type="SUPFAM" id="SSF50447">
    <property type="entry name" value="Translation proteins"/>
    <property type="match status" value="1"/>
</dbReference>
<dbReference type="PROSITE" id="PS00474">
    <property type="entry name" value="RIBOSOMAL_L3"/>
    <property type="match status" value="1"/>
</dbReference>
<organism>
    <name type="scientific">Bacillus thuringiensis (strain Al Hakam)</name>
    <dbReference type="NCBI Taxonomy" id="412694"/>
    <lineage>
        <taxon>Bacteria</taxon>
        <taxon>Bacillati</taxon>
        <taxon>Bacillota</taxon>
        <taxon>Bacilli</taxon>
        <taxon>Bacillales</taxon>
        <taxon>Bacillaceae</taxon>
        <taxon>Bacillus</taxon>
        <taxon>Bacillus cereus group</taxon>
    </lineage>
</organism>
<protein>
    <recommendedName>
        <fullName evidence="1">Large ribosomal subunit protein uL3</fullName>
    </recommendedName>
    <alternativeName>
        <fullName evidence="3">50S ribosomal protein L3</fullName>
    </alternativeName>
</protein>
<evidence type="ECO:0000255" key="1">
    <source>
        <dbReference type="HAMAP-Rule" id="MF_01325"/>
    </source>
</evidence>
<evidence type="ECO:0000256" key="2">
    <source>
        <dbReference type="SAM" id="MobiDB-lite"/>
    </source>
</evidence>
<evidence type="ECO:0000305" key="3"/>
<reference key="1">
    <citation type="journal article" date="2007" name="J. Bacteriol.">
        <title>The complete genome sequence of Bacillus thuringiensis Al Hakam.</title>
        <authorList>
            <person name="Challacombe J.F."/>
            <person name="Altherr M.R."/>
            <person name="Xie G."/>
            <person name="Bhotika S.S."/>
            <person name="Brown N."/>
            <person name="Bruce D."/>
            <person name="Campbell C.S."/>
            <person name="Campbell M.L."/>
            <person name="Chen J."/>
            <person name="Chertkov O."/>
            <person name="Cleland C."/>
            <person name="Dimitrijevic M."/>
            <person name="Doggett N.A."/>
            <person name="Fawcett J.J."/>
            <person name="Glavina T."/>
            <person name="Goodwin L.A."/>
            <person name="Green L.D."/>
            <person name="Han C.S."/>
            <person name="Hill K.K."/>
            <person name="Hitchcock P."/>
            <person name="Jackson P.J."/>
            <person name="Keim P."/>
            <person name="Kewalramani A.R."/>
            <person name="Longmire J."/>
            <person name="Lucas S."/>
            <person name="Malfatti S."/>
            <person name="Martinez D."/>
            <person name="McMurry K."/>
            <person name="Meincke L.J."/>
            <person name="Misra M."/>
            <person name="Moseman B.L."/>
            <person name="Mundt M."/>
            <person name="Munk A.C."/>
            <person name="Okinaka R.T."/>
            <person name="Parson-Quintana B."/>
            <person name="Reilly L.P."/>
            <person name="Richardson P."/>
            <person name="Robinson D.L."/>
            <person name="Saunders E."/>
            <person name="Tapia R."/>
            <person name="Tesmer J.G."/>
            <person name="Thayer N."/>
            <person name="Thompson L.S."/>
            <person name="Tice H."/>
            <person name="Ticknor L.O."/>
            <person name="Wills P.L."/>
            <person name="Gilna P."/>
            <person name="Brettin T.S."/>
        </authorList>
    </citation>
    <scope>NUCLEOTIDE SEQUENCE [LARGE SCALE GENOMIC DNA]</scope>
    <source>
        <strain>Al Hakam</strain>
    </source>
</reference>